<proteinExistence type="evidence at transcript level"/>
<keyword id="KW-0067">ATP-binding</keyword>
<keyword id="KW-0143">Chaperone</keyword>
<keyword id="KW-0150">Chloroplast</keyword>
<keyword id="KW-0547">Nucleotide-binding</keyword>
<keyword id="KW-0934">Plastid</keyword>
<keyword id="KW-0677">Repeat</keyword>
<keyword id="KW-0809">Transit peptide</keyword>
<comment type="function">
    <text>May interact with a ClpP-like protease involved in degradation of denatured proteins in the chloroplast.</text>
</comment>
<comment type="subcellular location">
    <subcellularLocation>
        <location>Plastid</location>
        <location>Chloroplast</location>
    </subcellularLocation>
</comment>
<comment type="similarity">
    <text evidence="5">Belongs to the ClpA/ClpB family.</text>
</comment>
<feature type="transit peptide" description="Chloroplast" evidence="1">
    <location>
        <begin position="1" status="less than"/>
        <end status="unknown"/>
    </location>
</feature>
<feature type="chain" id="PRO_0000005501" description="ATP-dependent Clp protease ATP-binding subunit ClpA homolog, chloroplastic">
    <location>
        <begin status="unknown"/>
        <end position="874"/>
    </location>
</feature>
<feature type="domain" description="Clp R" evidence="3">
    <location>
        <begin position="42"/>
        <end position="184"/>
    </location>
</feature>
<feature type="domain" description="UVR" evidence="2">
    <location>
        <begin position="458"/>
        <end position="492"/>
    </location>
</feature>
<feature type="region of interest" description="Repeat 1" evidence="3">
    <location>
        <begin position="45"/>
        <end position="110"/>
    </location>
</feature>
<feature type="region of interest" description="Repeat 2" evidence="3">
    <location>
        <begin position="120"/>
        <end position="184"/>
    </location>
</feature>
<feature type="region of interest" description="I">
    <location>
        <begin position="204"/>
        <end position="451"/>
    </location>
</feature>
<feature type="region of interest" description="II">
    <location>
        <begin position="517"/>
        <end position="708"/>
    </location>
</feature>
<feature type="region of interest" description="Disordered" evidence="4">
    <location>
        <begin position="852"/>
        <end position="874"/>
    </location>
</feature>
<feature type="compositionally biased region" description="Acidic residues" evidence="4">
    <location>
        <begin position="865"/>
        <end position="874"/>
    </location>
</feature>
<feature type="binding site" evidence="1">
    <location>
        <begin position="249"/>
        <end position="256"/>
    </location>
    <ligand>
        <name>ATP</name>
        <dbReference type="ChEBI" id="CHEBI:30616"/>
    </ligand>
</feature>
<feature type="binding site" evidence="1">
    <location>
        <begin position="591"/>
        <end position="598"/>
    </location>
    <ligand>
        <name>ATP</name>
        <dbReference type="ChEBI" id="CHEBI:30616"/>
    </ligand>
</feature>
<feature type="non-terminal residue">
    <location>
        <position position="1"/>
    </location>
</feature>
<dbReference type="EMBL" id="X75328">
    <property type="protein sequence ID" value="CAA53077.1"/>
    <property type="molecule type" value="mRNA"/>
</dbReference>
<dbReference type="PIR" id="S37557">
    <property type="entry name" value="S37557"/>
</dbReference>
<dbReference type="SMR" id="P46523"/>
<dbReference type="MEROPS" id="X20.001"/>
<dbReference type="GO" id="GO:0009507">
    <property type="term" value="C:chloroplast"/>
    <property type="evidence" value="ECO:0007669"/>
    <property type="project" value="UniProtKB-SubCell"/>
</dbReference>
<dbReference type="GO" id="GO:0005524">
    <property type="term" value="F:ATP binding"/>
    <property type="evidence" value="ECO:0007669"/>
    <property type="project" value="UniProtKB-KW"/>
</dbReference>
<dbReference type="GO" id="GO:0016887">
    <property type="term" value="F:ATP hydrolysis activity"/>
    <property type="evidence" value="ECO:0007669"/>
    <property type="project" value="InterPro"/>
</dbReference>
<dbReference type="CDD" id="cd00009">
    <property type="entry name" value="AAA"/>
    <property type="match status" value="1"/>
</dbReference>
<dbReference type="CDD" id="cd19499">
    <property type="entry name" value="RecA-like_ClpB_Hsp104-like"/>
    <property type="match status" value="1"/>
</dbReference>
<dbReference type="FunFam" id="1.10.8.60:FF:000017">
    <property type="entry name" value="ATP-dependent chaperone ClpB"/>
    <property type="match status" value="1"/>
</dbReference>
<dbReference type="FunFam" id="1.10.1780.10:FF:000004">
    <property type="entry name" value="ATP-dependent Clp protease ATP-binding subunit ClpC"/>
    <property type="match status" value="1"/>
</dbReference>
<dbReference type="FunFam" id="3.40.50.300:FF:000025">
    <property type="entry name" value="ATP-dependent Clp protease subunit"/>
    <property type="match status" value="1"/>
</dbReference>
<dbReference type="FunFam" id="3.40.50.300:FF:000010">
    <property type="entry name" value="Chaperone clpB 1, putative"/>
    <property type="match status" value="1"/>
</dbReference>
<dbReference type="Gene3D" id="1.10.8.60">
    <property type="match status" value="2"/>
</dbReference>
<dbReference type="Gene3D" id="1.10.1780.10">
    <property type="entry name" value="Clp, N-terminal domain"/>
    <property type="match status" value="1"/>
</dbReference>
<dbReference type="Gene3D" id="3.40.50.300">
    <property type="entry name" value="P-loop containing nucleotide triphosphate hydrolases"/>
    <property type="match status" value="2"/>
</dbReference>
<dbReference type="Gene3D" id="4.10.860.10">
    <property type="entry name" value="UVR domain"/>
    <property type="match status" value="1"/>
</dbReference>
<dbReference type="InterPro" id="IPR003593">
    <property type="entry name" value="AAA+_ATPase"/>
</dbReference>
<dbReference type="InterPro" id="IPR003959">
    <property type="entry name" value="ATPase_AAA_core"/>
</dbReference>
<dbReference type="InterPro" id="IPR019489">
    <property type="entry name" value="Clp_ATPase_C"/>
</dbReference>
<dbReference type="InterPro" id="IPR036628">
    <property type="entry name" value="Clp_N_dom_sf"/>
</dbReference>
<dbReference type="InterPro" id="IPR004176">
    <property type="entry name" value="Clp_R_dom"/>
</dbReference>
<dbReference type="InterPro" id="IPR001270">
    <property type="entry name" value="ClpA/B"/>
</dbReference>
<dbReference type="InterPro" id="IPR018368">
    <property type="entry name" value="ClpA/B_CS1"/>
</dbReference>
<dbReference type="InterPro" id="IPR028299">
    <property type="entry name" value="ClpA/B_CS2"/>
</dbReference>
<dbReference type="InterPro" id="IPR041546">
    <property type="entry name" value="ClpA/ClpB_AAA_lid"/>
</dbReference>
<dbReference type="InterPro" id="IPR050130">
    <property type="entry name" value="ClpA_ClpB"/>
</dbReference>
<dbReference type="InterPro" id="IPR027417">
    <property type="entry name" value="P-loop_NTPase"/>
</dbReference>
<dbReference type="InterPro" id="IPR001943">
    <property type="entry name" value="UVR_dom"/>
</dbReference>
<dbReference type="PANTHER" id="PTHR11638">
    <property type="entry name" value="ATP-DEPENDENT CLP PROTEASE"/>
    <property type="match status" value="1"/>
</dbReference>
<dbReference type="PANTHER" id="PTHR11638:SF155">
    <property type="entry name" value="CHAPERONE PROTEIN CLPC1, CHLOROPLASTIC-LIKE"/>
    <property type="match status" value="1"/>
</dbReference>
<dbReference type="Pfam" id="PF00004">
    <property type="entry name" value="AAA"/>
    <property type="match status" value="1"/>
</dbReference>
<dbReference type="Pfam" id="PF07724">
    <property type="entry name" value="AAA_2"/>
    <property type="match status" value="1"/>
</dbReference>
<dbReference type="Pfam" id="PF17871">
    <property type="entry name" value="AAA_lid_9"/>
    <property type="match status" value="1"/>
</dbReference>
<dbReference type="Pfam" id="PF02861">
    <property type="entry name" value="Clp_N"/>
    <property type="match status" value="2"/>
</dbReference>
<dbReference type="Pfam" id="PF10431">
    <property type="entry name" value="ClpB_D2-small"/>
    <property type="match status" value="1"/>
</dbReference>
<dbReference type="PRINTS" id="PR00300">
    <property type="entry name" value="CLPPROTEASEA"/>
</dbReference>
<dbReference type="SMART" id="SM00382">
    <property type="entry name" value="AAA"/>
    <property type="match status" value="2"/>
</dbReference>
<dbReference type="SMART" id="SM01086">
    <property type="entry name" value="ClpB_D2-small"/>
    <property type="match status" value="1"/>
</dbReference>
<dbReference type="SUPFAM" id="SSF81923">
    <property type="entry name" value="Double Clp-N motif"/>
    <property type="match status" value="1"/>
</dbReference>
<dbReference type="SUPFAM" id="SSF52540">
    <property type="entry name" value="P-loop containing nucleoside triphosphate hydrolases"/>
    <property type="match status" value="2"/>
</dbReference>
<dbReference type="PROSITE" id="PS51903">
    <property type="entry name" value="CLP_R"/>
    <property type="match status" value="1"/>
</dbReference>
<dbReference type="PROSITE" id="PS00870">
    <property type="entry name" value="CLPAB_1"/>
    <property type="match status" value="1"/>
</dbReference>
<dbReference type="PROSITE" id="PS00871">
    <property type="entry name" value="CLPAB_2"/>
    <property type="match status" value="1"/>
</dbReference>
<dbReference type="PROSITE" id="PS50151">
    <property type="entry name" value="UVR"/>
    <property type="match status" value="1"/>
</dbReference>
<reference key="1">
    <citation type="journal article" date="1994" name="Plant Physiol.">
        <title>Nucleotide sequence of a Brassica napus Clp homolog.</title>
        <authorList>
            <person name="Ko K."/>
            <person name="Duong C."/>
            <person name="Ko Z.W."/>
        </authorList>
    </citation>
    <scope>NUCLEOTIDE SEQUENCE [MRNA]</scope>
    <source>
        <strain>cv. Topas</strain>
        <tissue>Seed</tissue>
    </source>
</reference>
<name>CLPA_BRANA</name>
<organism>
    <name type="scientific">Brassica napus</name>
    <name type="common">Rape</name>
    <dbReference type="NCBI Taxonomy" id="3708"/>
    <lineage>
        <taxon>Eukaryota</taxon>
        <taxon>Viridiplantae</taxon>
        <taxon>Streptophyta</taxon>
        <taxon>Embryophyta</taxon>
        <taxon>Tracheophyta</taxon>
        <taxon>Spermatophyta</taxon>
        <taxon>Magnoliopsida</taxon>
        <taxon>eudicotyledons</taxon>
        <taxon>Gunneridae</taxon>
        <taxon>Pentapetalae</taxon>
        <taxon>rosids</taxon>
        <taxon>malvids</taxon>
        <taxon>Brassicales</taxon>
        <taxon>Brassicaceae</taxon>
        <taxon>Brassiceae</taxon>
        <taxon>Brassica</taxon>
    </lineage>
</organism>
<gene>
    <name type="primary">CLPA</name>
</gene>
<protein>
    <recommendedName>
        <fullName>ATP-dependent Clp protease ATP-binding subunit ClpA homolog, chloroplastic</fullName>
    </recommendedName>
</protein>
<accession>P46523</accession>
<sequence>VAVGNNVLDTLGRSRQSFGGKVRQAMNVPKGKGSRGVVKAMFERFTEKAIKVIMLAQEEARRLGHNFVGTEQILLGLIGEGTGIAAKVLKSMGINLKDARVEVEKIIGRGSGFVAVEIPFTPRAKRVLELSLEEARQLGHNYIGSEHLLLGLLREGEGVAARVLENLGADPSNIRTQVIRMVGENNEVTANVGGGSGTNKMPTLEEYGTNLTKLAEEGKLDPVVGRHPQIERVVQILGRRTKNNPCLIGEPGVGKTAIAEGLAQRIASGVVRETSEGKKVITLDMGLLAAGTKYRGEFEERVKKLMEEIKQSDEIILFIDEVHTLIGAGAAEGAIDAANILKPALARGELQCIGATTLDEYRKHIEKDPALERRFQPVKVPEPTVDETIQILKGLRERYEIHHKLRYTDESLVAAAQLSYQYISDRFLPDRAIDLMDEAGSRVRLRHAQVPEEARELEKELRQITKENEAVRGQDFEKAGTLRDREIELRAEVSAIQAKGKEMSKAESETGDEGPMVTESDIQHIVSSWTGILVEKVSTDESDLLLKMEETLHKRVIGQDEAVKAISRAIRRARVGLKNPNRPIASFIFFGPTGVGKSELAKALAAYYFGCEEAMIRLDMSEFMERHTVSKLIGSPPGYVGYTEPPQLTEAVRRRPYTVVLFDEIEKAHPDVFNMMLQILEDGRLTNSKGRTVDFKNTLLIMTSNVGSSVIEKGGRRIGFDLDYEKDSSYNRIKSLVTQELKQYFRPEFLNRLDEMILFRQLTKLEVKEIADILLQELFERLKKKEVELQVTERFKERVVDEGYNPSYGARPLRRAIMRLLEDSMEEKMLAREIKEGDSVIVDVDSEGKVTVLNGGSGTPTTSLEEQEDSLPVA</sequence>
<evidence type="ECO:0000255" key="1"/>
<evidence type="ECO:0000255" key="2">
    <source>
        <dbReference type="PROSITE-ProRule" id="PRU00217"/>
    </source>
</evidence>
<evidence type="ECO:0000255" key="3">
    <source>
        <dbReference type="PROSITE-ProRule" id="PRU01251"/>
    </source>
</evidence>
<evidence type="ECO:0000256" key="4">
    <source>
        <dbReference type="SAM" id="MobiDB-lite"/>
    </source>
</evidence>
<evidence type="ECO:0000305" key="5"/>